<protein>
    <recommendedName>
        <fullName>Acyl carrier protein homolog</fullName>
        <shortName>ACP</shortName>
    </recommendedName>
</protein>
<feature type="chain" id="PRO_0000180266" description="Acyl carrier protein homolog">
    <location>
        <begin position="1"/>
        <end position="84"/>
    </location>
</feature>
<feature type="domain" description="Carrier" evidence="2">
    <location>
        <begin position="4"/>
        <end position="79"/>
    </location>
</feature>
<feature type="modified residue" description="O-(pantetheine 4'-phosphoryl)serine" evidence="2">
    <location>
        <position position="39"/>
    </location>
</feature>
<proteinExistence type="inferred from homology"/>
<comment type="function">
    <text evidence="1">Carrier of the growing fatty acid chain in fatty acid biosynthesis.</text>
</comment>
<comment type="pathway">
    <text>Lipid metabolism; fatty acid biosynthesis.</text>
</comment>
<comment type="PTM">
    <text evidence="3">4'-phosphopantetheine is transferred from CoA to a specific serine of the apo-ACP-like protein.</text>
</comment>
<sequence length="84" mass="9838">MQERDILLKIKEIAKAKNFKTELDESVLQKPFRELKIDSLDMFSVIVSLEKEFDIMFEDEKLMQLNNLAELIAEVKHLISQKGV</sequence>
<keyword id="KW-0275">Fatty acid biosynthesis</keyword>
<keyword id="KW-0276">Fatty acid metabolism</keyword>
<keyword id="KW-0444">Lipid biosynthesis</keyword>
<keyword id="KW-0443">Lipid metabolism</keyword>
<keyword id="KW-0596">Phosphopantetheine</keyword>
<keyword id="KW-0597">Phosphoprotein</keyword>
<keyword id="KW-1185">Reference proteome</keyword>
<dbReference type="EMBL" id="U00089">
    <property type="protein sequence ID" value="AAB96080.1"/>
    <property type="molecule type" value="Genomic_DNA"/>
</dbReference>
<dbReference type="PIR" id="S73758">
    <property type="entry name" value="S73758"/>
</dbReference>
<dbReference type="RefSeq" id="NP_110094.1">
    <property type="nucleotide sequence ID" value="NC_000912.1"/>
</dbReference>
<dbReference type="RefSeq" id="WP_010874762.1">
    <property type="nucleotide sequence ID" value="NZ_OU342337.1"/>
</dbReference>
<dbReference type="SMR" id="P75378"/>
<dbReference type="STRING" id="272634.MPN_406"/>
<dbReference type="EnsemblBacteria" id="AAB96080">
    <property type="protein sequence ID" value="AAB96080"/>
    <property type="gene ID" value="MPN_406"/>
</dbReference>
<dbReference type="KEGG" id="mpn:MPN_406"/>
<dbReference type="PATRIC" id="fig|272634.6.peg.439"/>
<dbReference type="HOGENOM" id="CLU_108696_15_0_14"/>
<dbReference type="OrthoDB" id="400140at2"/>
<dbReference type="BioCyc" id="MPNE272634:G1GJ3-651-MONOMER"/>
<dbReference type="UniPathway" id="UPA00094"/>
<dbReference type="Proteomes" id="UP000000808">
    <property type="component" value="Chromosome"/>
</dbReference>
<dbReference type="GO" id="GO:0006633">
    <property type="term" value="P:fatty acid biosynthetic process"/>
    <property type="evidence" value="ECO:0007669"/>
    <property type="project" value="UniProtKB-UniPathway"/>
</dbReference>
<dbReference type="Gene3D" id="1.10.1200.10">
    <property type="entry name" value="ACP-like"/>
    <property type="match status" value="1"/>
</dbReference>
<dbReference type="InterPro" id="IPR036736">
    <property type="entry name" value="ACP-like_sf"/>
</dbReference>
<dbReference type="InterPro" id="IPR009081">
    <property type="entry name" value="PP-bd_ACP"/>
</dbReference>
<dbReference type="Pfam" id="PF00550">
    <property type="entry name" value="PP-binding"/>
    <property type="match status" value="1"/>
</dbReference>
<dbReference type="SUPFAM" id="SSF47336">
    <property type="entry name" value="ACP-like"/>
    <property type="match status" value="1"/>
</dbReference>
<dbReference type="PROSITE" id="PS50075">
    <property type="entry name" value="CARRIER"/>
    <property type="match status" value="1"/>
</dbReference>
<organism>
    <name type="scientific">Mycoplasma pneumoniae (strain ATCC 29342 / M129 / Subtype 1)</name>
    <name type="common">Mycoplasmoides pneumoniae</name>
    <dbReference type="NCBI Taxonomy" id="272634"/>
    <lineage>
        <taxon>Bacteria</taxon>
        <taxon>Bacillati</taxon>
        <taxon>Mycoplasmatota</taxon>
        <taxon>Mycoplasmoidales</taxon>
        <taxon>Mycoplasmoidaceae</taxon>
        <taxon>Mycoplasmoides</taxon>
    </lineage>
</organism>
<accession>P75378</accession>
<reference key="1">
    <citation type="journal article" date="1996" name="Nucleic Acids Res.">
        <title>Complete sequence analysis of the genome of the bacterium Mycoplasma pneumoniae.</title>
        <authorList>
            <person name="Himmelreich R."/>
            <person name="Hilbert H."/>
            <person name="Plagens H."/>
            <person name="Pirkl E."/>
            <person name="Li B.-C."/>
            <person name="Herrmann R."/>
        </authorList>
    </citation>
    <scope>NUCLEOTIDE SEQUENCE [LARGE SCALE GENOMIC DNA]</scope>
    <source>
        <strain>ATCC 29342 / M129 / Subtype 1</strain>
    </source>
</reference>
<evidence type="ECO:0000250" key="1"/>
<evidence type="ECO:0000255" key="2">
    <source>
        <dbReference type="PROSITE-ProRule" id="PRU00258"/>
    </source>
</evidence>
<evidence type="ECO:0000305" key="3"/>
<gene>
    <name type="ordered locus">MPN_406</name>
    <name type="ORF">MP432</name>
</gene>
<name>ACPH_MYCPN</name>